<evidence type="ECO:0000256" key="1">
    <source>
        <dbReference type="SAM" id="MobiDB-lite"/>
    </source>
</evidence>
<proteinExistence type="predicted"/>
<sequence length="309" mass="33175">IGEVGSLVRAANCPRPQRNLPYAARTAPAPAQPPSPAPTPSRTPPVSATPRHRRRPERSKTPDKRSAETTQARTVERTGSAPKHRPEARCRQQIPWDDTHRQCAGSVGHNTLTALNTPSRTHHAAPHRRCFGCVGARPGGCVPGVSRACVGCVGGVLAGCVRVCRGRVPGVSCRVCRGRVAGVPAGCGGGVCRRCARPRGVRLRRNECVASRPLFPPRSPGPSSLAPGRCFSCVPRDPCCRPPGTSSFPRGITQTQTRVFFSPCAPHVAFIRRRRPPHHTQLVAVHTRNSKFHPPAKNTPPPLEDPPRG</sequence>
<protein>
    <recommendedName>
        <fullName>Uncharacterized protein J1L</fullName>
    </recommendedName>
</protein>
<accession>P17143</accession>
<organismHost>
    <name type="scientific">Homo sapiens</name>
    <name type="common">Human</name>
    <dbReference type="NCBI Taxonomy" id="9606"/>
</organismHost>
<name>J1L_HCMVA</name>
<dbReference type="EMBL" id="X17403">
    <property type="protein sequence ID" value="CAA35310.1"/>
    <property type="status" value="ALT_TERM"/>
    <property type="molecule type" value="Genomic_DNA"/>
</dbReference>
<dbReference type="PIR" id="S09913">
    <property type="entry name" value="S09913"/>
</dbReference>
<dbReference type="Proteomes" id="UP000008991">
    <property type="component" value="Segment"/>
</dbReference>
<reference key="1">
    <citation type="journal article" date="1990" name="Curr. Top. Microbiol. Immunol.">
        <title>Analysis of the protein-coding content of the sequence of human cytomegalovirus strain AD169.</title>
        <authorList>
            <person name="Chee M.S."/>
            <person name="Bankier A.T."/>
            <person name="Beck S."/>
            <person name="Bohni R."/>
            <person name="Brown C.M."/>
            <person name="Cerny R."/>
            <person name="Horsnell T."/>
            <person name="Hutchison C.A. III"/>
            <person name="Kouzarides T."/>
            <person name="Martignetti J.A."/>
            <person name="Preddie E."/>
            <person name="Satchwell S.C."/>
            <person name="Tomlinson P."/>
            <person name="Weston K.M."/>
            <person name="Barrell B.G."/>
        </authorList>
    </citation>
    <scope>NUCLEOTIDE SEQUENCE [LARGE SCALE GENOMIC DNA]</scope>
</reference>
<organism>
    <name type="scientific">Human cytomegalovirus (strain AD169)</name>
    <name type="common">HHV-5</name>
    <name type="synonym">Human herpesvirus 5</name>
    <dbReference type="NCBI Taxonomy" id="10360"/>
    <lineage>
        <taxon>Viruses</taxon>
        <taxon>Duplodnaviria</taxon>
        <taxon>Heunggongvirae</taxon>
        <taxon>Peploviricota</taxon>
        <taxon>Herviviricetes</taxon>
        <taxon>Herpesvirales</taxon>
        <taxon>Orthoherpesviridae</taxon>
        <taxon>Betaherpesvirinae</taxon>
        <taxon>Cytomegalovirus</taxon>
        <taxon>Cytomegalovirus humanbeta5</taxon>
        <taxon>Human cytomegalovirus</taxon>
    </lineage>
</organism>
<feature type="chain" id="PRO_0000115264" description="Uncharacterized protein J1L">
    <location>
        <begin position="1"/>
        <end position="309"/>
    </location>
</feature>
<feature type="region of interest" description="Disordered" evidence="1">
    <location>
        <begin position="1"/>
        <end position="94"/>
    </location>
</feature>
<feature type="region of interest" description="Disordered" evidence="1">
    <location>
        <begin position="286"/>
        <end position="309"/>
    </location>
</feature>
<feature type="compositionally biased region" description="Pro residues" evidence="1">
    <location>
        <begin position="30"/>
        <end position="43"/>
    </location>
</feature>
<feature type="compositionally biased region" description="Basic and acidic residues" evidence="1">
    <location>
        <begin position="58"/>
        <end position="67"/>
    </location>
</feature>
<feature type="compositionally biased region" description="Pro residues" evidence="1">
    <location>
        <begin position="297"/>
        <end position="309"/>
    </location>
</feature>